<protein>
    <recommendedName>
        <fullName>Glycosyl hydrolase family 109 protein 1</fullName>
        <ecNumber>3.2.1.-</ecNumber>
    </recommendedName>
</protein>
<dbReference type="EC" id="3.2.1.-"/>
<dbReference type="EMBL" id="AP006841">
    <property type="protein sequence ID" value="BAD47682.1"/>
    <property type="molecule type" value="Genomic_DNA"/>
</dbReference>
<dbReference type="RefSeq" id="WP_005785179.1">
    <property type="nucleotide sequence ID" value="NZ_UYXF01000001.1"/>
</dbReference>
<dbReference type="RefSeq" id="YP_098216.1">
    <property type="nucleotide sequence ID" value="NC_006347.1"/>
</dbReference>
<dbReference type="SMR" id="P0C863"/>
<dbReference type="STRING" id="295405.BF0931"/>
<dbReference type="CAZy" id="GH109">
    <property type="family name" value="Glycoside Hydrolase Family 109"/>
</dbReference>
<dbReference type="KEGG" id="bfr:BF0931"/>
<dbReference type="PATRIC" id="fig|295405.11.peg.934"/>
<dbReference type="HOGENOM" id="CLU_046965_0_0_10"/>
<dbReference type="OrthoDB" id="9771072at2"/>
<dbReference type="Proteomes" id="UP000002197">
    <property type="component" value="Chromosome"/>
</dbReference>
<dbReference type="GO" id="GO:0005886">
    <property type="term" value="C:plasma membrane"/>
    <property type="evidence" value="ECO:0007669"/>
    <property type="project" value="UniProtKB-SubCell"/>
</dbReference>
<dbReference type="GO" id="GO:0016798">
    <property type="term" value="F:hydrolase activity, acting on glycosyl bonds"/>
    <property type="evidence" value="ECO:0007669"/>
    <property type="project" value="UniProtKB-KW"/>
</dbReference>
<dbReference type="GO" id="GO:0000166">
    <property type="term" value="F:nucleotide binding"/>
    <property type="evidence" value="ECO:0007669"/>
    <property type="project" value="InterPro"/>
</dbReference>
<dbReference type="Gene3D" id="3.30.360.10">
    <property type="entry name" value="Dihydrodipicolinate Reductase, domain 2"/>
    <property type="match status" value="1"/>
</dbReference>
<dbReference type="Gene3D" id="3.40.50.720">
    <property type="entry name" value="NAD(P)-binding Rossmann-like Domain"/>
    <property type="match status" value="1"/>
</dbReference>
<dbReference type="InterPro" id="IPR000683">
    <property type="entry name" value="Gfo/Idh/MocA-like_OxRdtase_N"/>
</dbReference>
<dbReference type="InterPro" id="IPR050463">
    <property type="entry name" value="Gfo/Idh/MocA_oxidrdct_glycsds"/>
</dbReference>
<dbReference type="InterPro" id="IPR049303">
    <property type="entry name" value="Glyco_hydro_109_C"/>
</dbReference>
<dbReference type="InterPro" id="IPR036291">
    <property type="entry name" value="NAD(P)-bd_dom_sf"/>
</dbReference>
<dbReference type="PANTHER" id="PTHR43818">
    <property type="entry name" value="BCDNA.GH03377"/>
    <property type="match status" value="1"/>
</dbReference>
<dbReference type="PANTHER" id="PTHR43818:SF1">
    <property type="entry name" value="GLYCOSYL HYDROLASE FAMILY 109 PROTEIN"/>
    <property type="match status" value="1"/>
</dbReference>
<dbReference type="Pfam" id="PF01408">
    <property type="entry name" value="GFO_IDH_MocA"/>
    <property type="match status" value="1"/>
</dbReference>
<dbReference type="Pfam" id="PF21252">
    <property type="entry name" value="Glyco_hydro_109_C"/>
    <property type="match status" value="1"/>
</dbReference>
<dbReference type="SUPFAM" id="SSF55347">
    <property type="entry name" value="Glyceraldehyde-3-phosphate dehydrogenase-like, C-terminal domain"/>
    <property type="match status" value="1"/>
</dbReference>
<dbReference type="SUPFAM" id="SSF51735">
    <property type="entry name" value="NAD(P)-binding Rossmann-fold domains"/>
    <property type="match status" value="1"/>
</dbReference>
<dbReference type="PROSITE" id="PS51257">
    <property type="entry name" value="PROKAR_LIPOPROTEIN"/>
    <property type="match status" value="1"/>
</dbReference>
<comment type="function">
    <text evidence="1">Glycosidase.</text>
</comment>
<comment type="cofactor">
    <cofactor evidence="1">
        <name>NAD(+)</name>
        <dbReference type="ChEBI" id="CHEBI:57540"/>
    </cofactor>
    <text evidence="1">Binds 1 NAD(+) per subunit. The NAD(+) cannot dissociate.</text>
</comment>
<comment type="subcellular location">
    <subcellularLocation>
        <location evidence="2">Cell membrane</location>
        <topology evidence="2">Lipid-anchor</topology>
    </subcellularLocation>
</comment>
<comment type="similarity">
    <text evidence="3">Belongs to the Gfo/Idh/MocA family. Glycosyl hydrolase 109 subfamily.</text>
</comment>
<gene>
    <name type="ordered locus">BF0931</name>
</gene>
<organism>
    <name type="scientific">Bacteroides fragilis (strain YCH46)</name>
    <dbReference type="NCBI Taxonomy" id="295405"/>
    <lineage>
        <taxon>Bacteria</taxon>
        <taxon>Pseudomonadati</taxon>
        <taxon>Bacteroidota</taxon>
        <taxon>Bacteroidia</taxon>
        <taxon>Bacteroidales</taxon>
        <taxon>Bacteroidaceae</taxon>
        <taxon>Bacteroides</taxon>
    </lineage>
</organism>
<sequence length="464" mass="52117">MFKHLNALFIGLALFACTSGAVAQTIKPIETPVPVRPAGQKDVVGLTTPKLDVVRVGFIGLGMRGPGAVERFTHIPGTQIVALCDLIPERVAGAQKILTKANLPEAASYSGSEDAWKKLCERKDIDLVYIATDWKHHAQMAIYAMEHGKHVAIEVPSAMTLDEIWALINTSEKTRKHCMQLENCVYDFFELTTLNMAQQGVFGEVLHTEGAYIHNLEDFWPYYWNNWRMDYNQNHRGDVYATHGMGPACQLLDIHRGDKMNYLVSMDTKAVNGPAYIKKTTGKEVKDFQNGDQTSTLIRTEKGKTILIQHNVMTPRPYSRMYQVVGADGYASKYPIEEYCMRPTQIASNDVPNHEKLNAHGSVPADVKKALMDKYKHPIHKELEETAKKVGGHGGMDYIMDYRLVYCLRNGLPLDMDVYDLAEWCCMADLTKLSIENSSAPVAIPDFTRGAWNKVKGYRHAFAK</sequence>
<accession>P0C863</accession>
<accession>Q64XU4</accession>
<reference key="1">
    <citation type="journal article" date="2004" name="Proc. Natl. Acad. Sci. U.S.A.">
        <title>Genomic analysis of Bacteroides fragilis reveals extensive DNA inversions regulating cell surface adaptation.</title>
        <authorList>
            <person name="Kuwahara T."/>
            <person name="Yamashita A."/>
            <person name="Hirakawa H."/>
            <person name="Nakayama H."/>
            <person name="Toh H."/>
            <person name="Okada N."/>
            <person name="Kuhara S."/>
            <person name="Hattori M."/>
            <person name="Hayashi T."/>
            <person name="Ohnishi Y."/>
        </authorList>
    </citation>
    <scope>NUCLEOTIDE SEQUENCE [LARGE SCALE GENOMIC DNA]</scope>
    <source>
        <strain>YCH46</strain>
    </source>
</reference>
<keyword id="KW-1003">Cell membrane</keyword>
<keyword id="KW-0326">Glycosidase</keyword>
<keyword id="KW-0378">Hydrolase</keyword>
<keyword id="KW-0449">Lipoprotein</keyword>
<keyword id="KW-0472">Membrane</keyword>
<keyword id="KW-0520">NAD</keyword>
<keyword id="KW-0564">Palmitate</keyword>
<keyword id="KW-0732">Signal</keyword>
<feature type="signal peptide" evidence="2">
    <location>
        <begin position="1"/>
        <end position="16"/>
    </location>
</feature>
<feature type="chain" id="PRO_0000348549" description="Glycosyl hydrolase family 109 protein 1">
    <location>
        <begin position="17"/>
        <end position="464"/>
    </location>
</feature>
<feature type="binding site" evidence="1">
    <location>
        <begin position="63"/>
        <end position="64"/>
    </location>
    <ligand>
        <name>NAD(+)</name>
        <dbReference type="ChEBI" id="CHEBI:57540"/>
    </ligand>
</feature>
<feature type="binding site" evidence="1">
    <location>
        <position position="85"/>
    </location>
    <ligand>
        <name>NAD(+)</name>
        <dbReference type="ChEBI" id="CHEBI:57540"/>
    </ligand>
</feature>
<feature type="binding site" evidence="1">
    <location>
        <begin position="134"/>
        <end position="137"/>
    </location>
    <ligand>
        <name>NAD(+)</name>
        <dbReference type="ChEBI" id="CHEBI:57540"/>
    </ligand>
</feature>
<feature type="binding site" evidence="1">
    <location>
        <begin position="154"/>
        <end position="155"/>
    </location>
    <ligand>
        <name>NAD(+)</name>
        <dbReference type="ChEBI" id="CHEBI:57540"/>
    </ligand>
</feature>
<feature type="binding site" evidence="1">
    <location>
        <position position="183"/>
    </location>
    <ligand>
        <name>NAD(+)</name>
        <dbReference type="ChEBI" id="CHEBI:57540"/>
    </ligand>
</feature>
<feature type="binding site" evidence="1">
    <location>
        <position position="212"/>
    </location>
    <ligand>
        <name>substrate</name>
    </ligand>
</feature>
<feature type="binding site" evidence="1">
    <location>
        <position position="228"/>
    </location>
    <ligand>
        <name>substrate</name>
    </ligand>
</feature>
<feature type="binding site" evidence="1">
    <location>
        <begin position="240"/>
        <end position="243"/>
    </location>
    <ligand>
        <name>substrate</name>
    </ligand>
</feature>
<feature type="binding site" evidence="1">
    <location>
        <position position="240"/>
    </location>
    <ligand>
        <name>NAD(+)</name>
        <dbReference type="ChEBI" id="CHEBI:57540"/>
    </ligand>
</feature>
<feature type="binding site" evidence="1">
    <location>
        <position position="318"/>
    </location>
    <ligand>
        <name>substrate</name>
    </ligand>
</feature>
<feature type="lipid moiety-binding region" description="N-palmitoyl cysteine" evidence="2">
    <location>
        <position position="17"/>
    </location>
</feature>
<feature type="lipid moiety-binding region" description="S-diacylglycerol cysteine" evidence="2">
    <location>
        <position position="17"/>
    </location>
</feature>
<proteinExistence type="inferred from homology"/>
<evidence type="ECO:0000250" key="1"/>
<evidence type="ECO:0000255" key="2">
    <source>
        <dbReference type="PROSITE-ProRule" id="PRU00303"/>
    </source>
</evidence>
<evidence type="ECO:0000305" key="3"/>
<name>G1091_BACFR</name>